<proteinExistence type="inferred from homology"/>
<evidence type="ECO:0000255" key="1">
    <source>
        <dbReference type="HAMAP-Rule" id="MF_01813"/>
    </source>
</evidence>
<keyword id="KW-0474">Menaquinone biosynthesis</keyword>
<keyword id="KW-0489">Methyltransferase</keyword>
<keyword id="KW-0949">S-adenosyl-L-methionine</keyword>
<keyword id="KW-0808">Transferase</keyword>
<keyword id="KW-0831">Ubiquinone biosynthesis</keyword>
<accession>Q8DDP9</accession>
<comment type="function">
    <text evidence="1">Methyltransferase required for the conversion of demethylmenaquinol (DMKH2) to menaquinol (MKH2) and the conversion of 2-polyprenyl-6-methoxy-1,4-benzoquinol (DDMQH2) to 2-polyprenyl-3-methyl-6-methoxy-1,4-benzoquinol (DMQH2).</text>
</comment>
<comment type="catalytic activity">
    <reaction evidence="1">
        <text>a 2-demethylmenaquinol + S-adenosyl-L-methionine = a menaquinol + S-adenosyl-L-homocysteine + H(+)</text>
        <dbReference type="Rhea" id="RHEA:42640"/>
        <dbReference type="Rhea" id="RHEA-COMP:9539"/>
        <dbReference type="Rhea" id="RHEA-COMP:9563"/>
        <dbReference type="ChEBI" id="CHEBI:15378"/>
        <dbReference type="ChEBI" id="CHEBI:18151"/>
        <dbReference type="ChEBI" id="CHEBI:55437"/>
        <dbReference type="ChEBI" id="CHEBI:57856"/>
        <dbReference type="ChEBI" id="CHEBI:59789"/>
        <dbReference type="EC" id="2.1.1.163"/>
    </reaction>
</comment>
<comment type="catalytic activity">
    <reaction evidence="1">
        <text>a 2-methoxy-6-(all-trans-polyprenyl)benzene-1,4-diol + S-adenosyl-L-methionine = a 5-methoxy-2-methyl-3-(all-trans-polyprenyl)benzene-1,4-diol + S-adenosyl-L-homocysteine + H(+)</text>
        <dbReference type="Rhea" id="RHEA:28286"/>
        <dbReference type="Rhea" id="RHEA-COMP:10858"/>
        <dbReference type="Rhea" id="RHEA-COMP:10859"/>
        <dbReference type="ChEBI" id="CHEBI:15378"/>
        <dbReference type="ChEBI" id="CHEBI:57856"/>
        <dbReference type="ChEBI" id="CHEBI:59789"/>
        <dbReference type="ChEBI" id="CHEBI:84166"/>
        <dbReference type="ChEBI" id="CHEBI:84167"/>
        <dbReference type="EC" id="2.1.1.201"/>
    </reaction>
</comment>
<comment type="pathway">
    <text evidence="1">Quinol/quinone metabolism; menaquinone biosynthesis; menaquinol from 1,4-dihydroxy-2-naphthoate: step 2/2.</text>
</comment>
<comment type="pathway">
    <text evidence="1">Cofactor biosynthesis; ubiquinone biosynthesis.</text>
</comment>
<comment type="similarity">
    <text evidence="1">Belongs to the class I-like SAM-binding methyltransferase superfamily. MenG/UbiE family.</text>
</comment>
<sequence>MTDISVQSNTALESSETTHFGFTTVAKEEKVAKVAQVFHSVAAKYDIMNDLMSGGIHRLWKRFTIDCSGARPGQRVLDLGGGTGDLTAKFSRIVGEKGHVILADINNSMLNVGRDKLRDSGIVGNVHYVQANAEELPFPDDYFDIITISFCLRNVTDKDKALRSMFRVLKPGGRLLVLEFSKPVFDPLSKVYDAYSFHLLPKMGELVANDADSYRYLAESIRMHPDQETLKGMMQEAGFENTSYYNLTGGIVALHRGYKF</sequence>
<feature type="chain" id="PRO_0000193349" description="Ubiquinone/menaquinone biosynthesis C-methyltransferase UbiE">
    <location>
        <begin position="1"/>
        <end position="260"/>
    </location>
</feature>
<feature type="binding site" evidence="1">
    <location>
        <position position="83"/>
    </location>
    <ligand>
        <name>S-adenosyl-L-methionine</name>
        <dbReference type="ChEBI" id="CHEBI:59789"/>
    </ligand>
</feature>
<feature type="binding site" evidence="1">
    <location>
        <position position="104"/>
    </location>
    <ligand>
        <name>S-adenosyl-L-methionine</name>
        <dbReference type="ChEBI" id="CHEBI:59789"/>
    </ligand>
</feature>
<feature type="binding site" evidence="1">
    <location>
        <begin position="132"/>
        <end position="133"/>
    </location>
    <ligand>
        <name>S-adenosyl-L-methionine</name>
        <dbReference type="ChEBI" id="CHEBI:59789"/>
    </ligand>
</feature>
<feature type="binding site" evidence="1">
    <location>
        <position position="149"/>
    </location>
    <ligand>
        <name>S-adenosyl-L-methionine</name>
        <dbReference type="ChEBI" id="CHEBI:59789"/>
    </ligand>
</feature>
<protein>
    <recommendedName>
        <fullName evidence="1">Ubiquinone/menaquinone biosynthesis C-methyltransferase UbiE</fullName>
        <ecNumber evidence="1">2.1.1.163</ecNumber>
        <ecNumber evidence="1">2.1.1.201</ecNumber>
    </recommendedName>
    <alternativeName>
        <fullName evidence="1">2-methoxy-6-polyprenyl-1,4-benzoquinol methylase</fullName>
    </alternativeName>
    <alternativeName>
        <fullName evidence="1">Demethylmenaquinone methyltransferase</fullName>
    </alternativeName>
</protein>
<gene>
    <name evidence="1" type="primary">ubiE</name>
    <name type="ordered locus">VV1_0909</name>
</gene>
<reference key="1">
    <citation type="submission" date="2002-12" db="EMBL/GenBank/DDBJ databases">
        <title>Complete genome sequence of Vibrio vulnificus CMCP6.</title>
        <authorList>
            <person name="Rhee J.H."/>
            <person name="Kim S.Y."/>
            <person name="Chung S.S."/>
            <person name="Kim J.J."/>
            <person name="Moon Y.H."/>
            <person name="Jeong H."/>
            <person name="Choy H.E."/>
        </authorList>
    </citation>
    <scope>NUCLEOTIDE SEQUENCE [LARGE SCALE GENOMIC DNA]</scope>
    <source>
        <strain>CMCP6</strain>
    </source>
</reference>
<name>UBIE_VIBVU</name>
<dbReference type="EC" id="2.1.1.163" evidence="1"/>
<dbReference type="EC" id="2.1.1.201" evidence="1"/>
<dbReference type="EMBL" id="AE016795">
    <property type="protein sequence ID" value="AAO09411.1"/>
    <property type="molecule type" value="Genomic_DNA"/>
</dbReference>
<dbReference type="RefSeq" id="WP_011078975.1">
    <property type="nucleotide sequence ID" value="NC_004459.3"/>
</dbReference>
<dbReference type="SMR" id="Q8DDP9"/>
<dbReference type="GeneID" id="93895206"/>
<dbReference type="KEGG" id="vvu:VV1_0909"/>
<dbReference type="HOGENOM" id="CLU_037990_0_0_6"/>
<dbReference type="UniPathway" id="UPA00079">
    <property type="reaction ID" value="UER00169"/>
</dbReference>
<dbReference type="UniPathway" id="UPA00232"/>
<dbReference type="Proteomes" id="UP000002275">
    <property type="component" value="Chromosome 1"/>
</dbReference>
<dbReference type="GO" id="GO:0008425">
    <property type="term" value="F:2-methoxy-6-polyprenyl-1,4-benzoquinol methyltransferase activity"/>
    <property type="evidence" value="ECO:0007669"/>
    <property type="project" value="UniProtKB-UniRule"/>
</dbReference>
<dbReference type="GO" id="GO:0043770">
    <property type="term" value="F:demethylmenaquinone methyltransferase activity"/>
    <property type="evidence" value="ECO:0007669"/>
    <property type="project" value="UniProtKB-UniRule"/>
</dbReference>
<dbReference type="GO" id="GO:0009060">
    <property type="term" value="P:aerobic respiration"/>
    <property type="evidence" value="ECO:0007669"/>
    <property type="project" value="UniProtKB-UniRule"/>
</dbReference>
<dbReference type="GO" id="GO:0009234">
    <property type="term" value="P:menaquinone biosynthetic process"/>
    <property type="evidence" value="ECO:0007669"/>
    <property type="project" value="UniProtKB-UniRule"/>
</dbReference>
<dbReference type="GO" id="GO:0032259">
    <property type="term" value="P:methylation"/>
    <property type="evidence" value="ECO:0007669"/>
    <property type="project" value="UniProtKB-KW"/>
</dbReference>
<dbReference type="CDD" id="cd02440">
    <property type="entry name" value="AdoMet_MTases"/>
    <property type="match status" value="1"/>
</dbReference>
<dbReference type="FunFam" id="3.40.50.150:FF:000014">
    <property type="entry name" value="Ubiquinone/menaquinone biosynthesis C-methyltransferase UbiE"/>
    <property type="match status" value="1"/>
</dbReference>
<dbReference type="Gene3D" id="3.40.50.150">
    <property type="entry name" value="Vaccinia Virus protein VP39"/>
    <property type="match status" value="1"/>
</dbReference>
<dbReference type="HAMAP" id="MF_01813">
    <property type="entry name" value="MenG_UbiE_methyltr"/>
    <property type="match status" value="1"/>
</dbReference>
<dbReference type="InterPro" id="IPR029063">
    <property type="entry name" value="SAM-dependent_MTases_sf"/>
</dbReference>
<dbReference type="InterPro" id="IPR004033">
    <property type="entry name" value="UbiE/COQ5_MeTrFase"/>
</dbReference>
<dbReference type="InterPro" id="IPR023576">
    <property type="entry name" value="UbiE/COQ5_MeTrFase_CS"/>
</dbReference>
<dbReference type="NCBIfam" id="TIGR01934">
    <property type="entry name" value="MenG_MenH_UbiE"/>
    <property type="match status" value="1"/>
</dbReference>
<dbReference type="NCBIfam" id="NF001240">
    <property type="entry name" value="PRK00216.1-1"/>
    <property type="match status" value="1"/>
</dbReference>
<dbReference type="NCBIfam" id="NF001244">
    <property type="entry name" value="PRK00216.1-5"/>
    <property type="match status" value="1"/>
</dbReference>
<dbReference type="PANTHER" id="PTHR43591:SF24">
    <property type="entry name" value="2-METHOXY-6-POLYPRENYL-1,4-BENZOQUINOL METHYLASE, MITOCHONDRIAL"/>
    <property type="match status" value="1"/>
</dbReference>
<dbReference type="PANTHER" id="PTHR43591">
    <property type="entry name" value="METHYLTRANSFERASE"/>
    <property type="match status" value="1"/>
</dbReference>
<dbReference type="Pfam" id="PF01209">
    <property type="entry name" value="Ubie_methyltran"/>
    <property type="match status" value="1"/>
</dbReference>
<dbReference type="SUPFAM" id="SSF53335">
    <property type="entry name" value="S-adenosyl-L-methionine-dependent methyltransferases"/>
    <property type="match status" value="1"/>
</dbReference>
<dbReference type="PROSITE" id="PS51608">
    <property type="entry name" value="SAM_MT_UBIE"/>
    <property type="match status" value="1"/>
</dbReference>
<dbReference type="PROSITE" id="PS01183">
    <property type="entry name" value="UBIE_1"/>
    <property type="match status" value="1"/>
</dbReference>
<dbReference type="PROSITE" id="PS01184">
    <property type="entry name" value="UBIE_2"/>
    <property type="match status" value="1"/>
</dbReference>
<organism>
    <name type="scientific">Vibrio vulnificus (strain CMCP6)</name>
    <dbReference type="NCBI Taxonomy" id="216895"/>
    <lineage>
        <taxon>Bacteria</taxon>
        <taxon>Pseudomonadati</taxon>
        <taxon>Pseudomonadota</taxon>
        <taxon>Gammaproteobacteria</taxon>
        <taxon>Vibrionales</taxon>
        <taxon>Vibrionaceae</taxon>
        <taxon>Vibrio</taxon>
    </lineage>
</organism>